<comment type="function">
    <text>Transfer of electrons from NADH to the respiratory chain. The immediate electron acceptor for the enzyme is believed to be ubiquinone.</text>
</comment>
<comment type="catalytic activity">
    <reaction>
        <text>a ubiquinone + NADH + 5 H(+)(in) = a ubiquinol + NAD(+) + 4 H(+)(out)</text>
        <dbReference type="Rhea" id="RHEA:29091"/>
        <dbReference type="Rhea" id="RHEA-COMP:9565"/>
        <dbReference type="Rhea" id="RHEA-COMP:9566"/>
        <dbReference type="ChEBI" id="CHEBI:15378"/>
        <dbReference type="ChEBI" id="CHEBI:16389"/>
        <dbReference type="ChEBI" id="CHEBI:17976"/>
        <dbReference type="ChEBI" id="CHEBI:57540"/>
        <dbReference type="ChEBI" id="CHEBI:57945"/>
        <dbReference type="EC" id="7.1.1.2"/>
    </reaction>
</comment>
<comment type="subunit">
    <text evidence="1">Complex I is composed of about 45 different subunits.</text>
</comment>
<comment type="subcellular location">
    <subcellularLocation>
        <location>Mitochondrion inner membrane</location>
        <topology>Peripheral membrane protein</topology>
        <orientation>Matrix side</orientation>
    </subcellularLocation>
</comment>
<sequence length="30" mass="3263">ASEALVEIKPGEIGMVSGIPDEHLRRFVVI</sequence>
<name>NUO2_SOLTU</name>
<keyword id="KW-0903">Direct protein sequencing</keyword>
<keyword id="KW-0472">Membrane</keyword>
<keyword id="KW-0496">Mitochondrion</keyword>
<keyword id="KW-0999">Mitochondrion inner membrane</keyword>
<keyword id="KW-0520">NAD</keyword>
<keyword id="KW-0560">Oxidoreductase</keyword>
<keyword id="KW-1185">Reference proteome</keyword>
<keyword id="KW-1278">Translocase</keyword>
<keyword id="KW-0830">Ubiquinone</keyword>
<feature type="chain" id="PRO_0000118850" description="NADH-ubiquinone oxidoreductase 18 kDa subunit">
    <location>
        <begin position="1"/>
        <end position="30" status="greater than"/>
    </location>
</feature>
<feature type="non-terminal residue">
    <location>
        <position position="30"/>
    </location>
</feature>
<reference key="1">
    <citation type="journal article" date="1996" name="Plant J.">
        <title>New insights into the composition, molecular mass and stoichiometry of the protein complexes of plant mitochondria.</title>
        <authorList>
            <person name="Jansch L."/>
            <person name="Kruft V."/>
            <person name="Schmitz U.K."/>
            <person name="Braun H.P."/>
        </authorList>
    </citation>
    <scope>PROTEIN SEQUENCE</scope>
    <source>
        <tissue>Tuber</tissue>
    </source>
</reference>
<reference key="2">
    <citation type="journal article" date="1994" name="J. Biol. Chem.">
        <title>Purification of the NADH:ubiquinone oxidoreductase (complex I) of the respiratory chain from the inner mitochondrial membrane of Solanum tuberosum.</title>
        <authorList>
            <person name="Herz U."/>
            <person name="Schroeder W."/>
            <person name="Liddell A."/>
            <person name="Leaver C.J."/>
            <person name="Brennicke A."/>
            <person name="Grohmann L."/>
        </authorList>
    </citation>
    <scope>PROTEIN SEQUENCE OF 1-22</scope>
    <source>
        <strain>cv. Bintje</strain>
        <tissue>Tuber</tissue>
    </source>
</reference>
<evidence type="ECO:0000250" key="1"/>
<dbReference type="EC" id="7.1.1.2"/>
<dbReference type="PIR" id="H49732">
    <property type="entry name" value="H49732"/>
</dbReference>
<dbReference type="SMR" id="P80268"/>
<dbReference type="PaxDb" id="4113-PGSC0003DMT400055230"/>
<dbReference type="InParanoid" id="P80268"/>
<dbReference type="Proteomes" id="UP000011115">
    <property type="component" value="Unassembled WGS sequence"/>
</dbReference>
<dbReference type="GO" id="GO:0005743">
    <property type="term" value="C:mitochondrial inner membrane"/>
    <property type="evidence" value="ECO:0007669"/>
    <property type="project" value="UniProtKB-SubCell"/>
</dbReference>
<dbReference type="GO" id="GO:0008137">
    <property type="term" value="F:NADH dehydrogenase (ubiquinone) activity"/>
    <property type="evidence" value="ECO:0007669"/>
    <property type="project" value="UniProtKB-EC"/>
</dbReference>
<protein>
    <recommendedName>
        <fullName>NADH-ubiquinone oxidoreductase 18 kDa subunit</fullName>
        <ecNumber>7.1.1.2</ecNumber>
    </recommendedName>
    <alternativeName>
        <fullName>Complex I-18kD</fullName>
        <shortName>CI-18kD</shortName>
    </alternativeName>
</protein>
<accession>P80268</accession>
<organism>
    <name type="scientific">Solanum tuberosum</name>
    <name type="common">Potato</name>
    <dbReference type="NCBI Taxonomy" id="4113"/>
    <lineage>
        <taxon>Eukaryota</taxon>
        <taxon>Viridiplantae</taxon>
        <taxon>Streptophyta</taxon>
        <taxon>Embryophyta</taxon>
        <taxon>Tracheophyta</taxon>
        <taxon>Spermatophyta</taxon>
        <taxon>Magnoliopsida</taxon>
        <taxon>eudicotyledons</taxon>
        <taxon>Gunneridae</taxon>
        <taxon>Pentapetalae</taxon>
        <taxon>asterids</taxon>
        <taxon>lamiids</taxon>
        <taxon>Solanales</taxon>
        <taxon>Solanaceae</taxon>
        <taxon>Solanoideae</taxon>
        <taxon>Solaneae</taxon>
        <taxon>Solanum</taxon>
    </lineage>
</organism>
<proteinExistence type="evidence at protein level"/>